<proteinExistence type="inferred from homology"/>
<reference key="1">
    <citation type="journal article" date="2009" name="Stand. Genomic Sci.">
        <title>Complete genome sequence of Stackebrandtia nassauensis type strain (LLR-40K-21).</title>
        <authorList>
            <person name="Munk C."/>
            <person name="Lapidus A."/>
            <person name="Copeland A."/>
            <person name="Jando M."/>
            <person name="Mayilraj S."/>
            <person name="Glavina Del Rio T."/>
            <person name="Nolan M."/>
            <person name="Chen F."/>
            <person name="Lucas S."/>
            <person name="Tice H."/>
            <person name="Cheng J.F."/>
            <person name="Han C."/>
            <person name="Detter J.C."/>
            <person name="Bruce D."/>
            <person name="Goodwin L."/>
            <person name="Chain P."/>
            <person name="Pitluck S."/>
            <person name="Goker M."/>
            <person name="Ovchinikova G."/>
            <person name="Pati A."/>
            <person name="Ivanova N."/>
            <person name="Mavromatis K."/>
            <person name="Chen A."/>
            <person name="Palaniappan K."/>
            <person name="Land M."/>
            <person name="Hauser L."/>
            <person name="Chang Y.J."/>
            <person name="Jeffries C.D."/>
            <person name="Bristow J."/>
            <person name="Eisen J.A."/>
            <person name="Markowitz V."/>
            <person name="Hugenholtz P."/>
            <person name="Kyrpides N.C."/>
            <person name="Klenk H.P."/>
        </authorList>
    </citation>
    <scope>NUCLEOTIDE SEQUENCE [LARGE SCALE GENOMIC DNA]</scope>
    <source>
        <strain>DSM 44728 / CIP 108903 / NRRL B-16338 / NBRC 102104 / LLR-40K-21</strain>
    </source>
</reference>
<protein>
    <recommendedName>
        <fullName evidence="1">Proteasome subunit beta</fullName>
        <ecNumber evidence="1">3.4.25.1</ecNumber>
    </recommendedName>
    <alternativeName>
        <fullName evidence="1">20S proteasome beta subunit</fullName>
    </alternativeName>
    <alternativeName>
        <fullName evidence="1">Proteasome core protein PrcB</fullName>
    </alternativeName>
</protein>
<gene>
    <name evidence="1" type="primary">prcB</name>
    <name type="ordered locus">Snas_4461</name>
</gene>
<evidence type="ECO:0000255" key="1">
    <source>
        <dbReference type="HAMAP-Rule" id="MF_02113"/>
    </source>
</evidence>
<accession>D3Q557</accession>
<dbReference type="EC" id="3.4.25.1" evidence="1"/>
<dbReference type="EMBL" id="CP001778">
    <property type="protein sequence ID" value="ADD44106.1"/>
    <property type="molecule type" value="Genomic_DNA"/>
</dbReference>
<dbReference type="SMR" id="D3Q557"/>
<dbReference type="STRING" id="446470.Snas_4461"/>
<dbReference type="MEROPS" id="T01.005"/>
<dbReference type="KEGG" id="sna:Snas_4461"/>
<dbReference type="eggNOG" id="COG0638">
    <property type="taxonomic scope" value="Bacteria"/>
</dbReference>
<dbReference type="HOGENOM" id="CLU_035750_2_0_11"/>
<dbReference type="OrthoDB" id="5174038at2"/>
<dbReference type="UniPathway" id="UPA00997"/>
<dbReference type="Proteomes" id="UP000000844">
    <property type="component" value="Chromosome"/>
</dbReference>
<dbReference type="GO" id="GO:0005737">
    <property type="term" value="C:cytoplasm"/>
    <property type="evidence" value="ECO:0007669"/>
    <property type="project" value="UniProtKB-SubCell"/>
</dbReference>
<dbReference type="GO" id="GO:0019774">
    <property type="term" value="C:proteasome core complex, beta-subunit complex"/>
    <property type="evidence" value="ECO:0007669"/>
    <property type="project" value="UniProtKB-UniRule"/>
</dbReference>
<dbReference type="GO" id="GO:0004298">
    <property type="term" value="F:threonine-type endopeptidase activity"/>
    <property type="evidence" value="ECO:0007669"/>
    <property type="project" value="UniProtKB-UniRule"/>
</dbReference>
<dbReference type="GO" id="GO:0019941">
    <property type="term" value="P:modification-dependent protein catabolic process"/>
    <property type="evidence" value="ECO:0007669"/>
    <property type="project" value="UniProtKB-UniRule"/>
</dbReference>
<dbReference type="GO" id="GO:0010498">
    <property type="term" value="P:proteasomal protein catabolic process"/>
    <property type="evidence" value="ECO:0007669"/>
    <property type="project" value="UniProtKB-UniRule"/>
</dbReference>
<dbReference type="CDD" id="cd01906">
    <property type="entry name" value="proteasome_protease_HslV"/>
    <property type="match status" value="1"/>
</dbReference>
<dbReference type="Gene3D" id="3.60.20.10">
    <property type="entry name" value="Glutamine Phosphoribosylpyrophosphate, subunit 1, domain 1"/>
    <property type="match status" value="1"/>
</dbReference>
<dbReference type="HAMAP" id="MF_02113_B">
    <property type="entry name" value="Proteasome_B_B"/>
    <property type="match status" value="1"/>
</dbReference>
<dbReference type="InterPro" id="IPR029055">
    <property type="entry name" value="Ntn_hydrolases_N"/>
</dbReference>
<dbReference type="InterPro" id="IPR001353">
    <property type="entry name" value="Proteasome_sua/b"/>
</dbReference>
<dbReference type="InterPro" id="IPR023333">
    <property type="entry name" value="Proteasome_suB-type"/>
</dbReference>
<dbReference type="InterPro" id="IPR022483">
    <property type="entry name" value="PSB_actinobac"/>
</dbReference>
<dbReference type="NCBIfam" id="TIGR03690">
    <property type="entry name" value="20S_bact_beta"/>
    <property type="match status" value="1"/>
</dbReference>
<dbReference type="PANTHER" id="PTHR32194:SF0">
    <property type="entry name" value="ATP-DEPENDENT PROTEASE SUBUNIT HSLV"/>
    <property type="match status" value="1"/>
</dbReference>
<dbReference type="PANTHER" id="PTHR32194">
    <property type="entry name" value="METALLOPROTEASE TLDD"/>
    <property type="match status" value="1"/>
</dbReference>
<dbReference type="Pfam" id="PF00227">
    <property type="entry name" value="Proteasome"/>
    <property type="match status" value="1"/>
</dbReference>
<dbReference type="SUPFAM" id="SSF56235">
    <property type="entry name" value="N-terminal nucleophile aminohydrolases (Ntn hydrolases)"/>
    <property type="match status" value="1"/>
</dbReference>
<dbReference type="PROSITE" id="PS51476">
    <property type="entry name" value="PROTEASOME_BETA_2"/>
    <property type="match status" value="1"/>
</dbReference>
<keyword id="KW-0068">Autocatalytic cleavage</keyword>
<keyword id="KW-0963">Cytoplasm</keyword>
<keyword id="KW-0378">Hydrolase</keyword>
<keyword id="KW-0645">Protease</keyword>
<keyword id="KW-0647">Proteasome</keyword>
<keyword id="KW-1185">Reference proteome</keyword>
<keyword id="KW-0888">Threonine protease</keyword>
<keyword id="KW-0865">Zymogen</keyword>
<comment type="function">
    <text evidence="1">Component of the proteasome core, a large protease complex with broad specificity involved in protein degradation.</text>
</comment>
<comment type="catalytic activity">
    <reaction evidence="1">
        <text>Cleavage of peptide bonds with very broad specificity.</text>
        <dbReference type="EC" id="3.4.25.1"/>
    </reaction>
</comment>
<comment type="activity regulation">
    <text evidence="1">The formation of the proteasomal ATPase ARC-20S proteasome complex, likely via the docking of the C-termini of ARC into the intersubunit pockets in the alpha-rings, may trigger opening of the gate for substrate entry. Interconversion between the open-gate and close-gate conformations leads to a dynamic regulation of the 20S proteasome proteolysis activity.</text>
</comment>
<comment type="pathway">
    <text evidence="1">Protein degradation; proteasomal Pup-dependent pathway.</text>
</comment>
<comment type="subunit">
    <text evidence="1">The 20S proteasome core is composed of 14 alpha and 14 beta subunits that assemble into four stacked heptameric rings, resulting in a barrel-shaped structure. The two inner rings, each composed of seven catalytic beta subunits, are sandwiched by two outer rings, each composed of seven alpha subunits. The catalytic chamber with the active sites is on the inside of the barrel. Has a gated structure, the ends of the cylinder being occluded by the N-termini of the alpha-subunits. Is capped by the proteasome-associated ATPase, ARC.</text>
</comment>
<comment type="subcellular location">
    <subcellularLocation>
        <location evidence="1">Cytoplasm</location>
    </subcellularLocation>
</comment>
<comment type="similarity">
    <text evidence="1">Belongs to the peptidase T1B family.</text>
</comment>
<sequence length="279" mass="29238">MSGTAEFPGRIPAPYLEVGSSSFVELLGSVAPELLPGRRPLPPGDMGDAAPHGTTIVALRCNEGVVMAGDRRATQGNMISLRDIQKVFPADAYSLIGIAGTAGLGVEMIRLFQAELEHFEKLEGNALSLHGKANKLANMIRGNLGIAMQGLAVLPLFAGFDTDAPDAASAGRIFSYDVVGGIYEEREYDAIGSGSIFAKSALKKRFQSEVDATEATRLAIEALYDAADDDSATGGPDLTRKLFPTVFTATADGAKRVPDAEIEAVSRAVVAARLENPGG</sequence>
<organism>
    <name type="scientific">Stackebrandtia nassauensis (strain DSM 44728 / CIP 108903 / NRRL B-16338 / NBRC 102104 / LLR-40K-21)</name>
    <dbReference type="NCBI Taxonomy" id="446470"/>
    <lineage>
        <taxon>Bacteria</taxon>
        <taxon>Bacillati</taxon>
        <taxon>Actinomycetota</taxon>
        <taxon>Actinomycetes</taxon>
        <taxon>Glycomycetales</taxon>
        <taxon>Glycomycetaceae</taxon>
        <taxon>Stackebrandtia</taxon>
    </lineage>
</organism>
<feature type="propeptide" id="PRO_0000397582" description="Removed in mature form; by autocatalysis" evidence="1">
    <location>
        <begin position="1"/>
        <end position="53"/>
    </location>
</feature>
<feature type="chain" id="PRO_0000397583" description="Proteasome subunit beta">
    <location>
        <begin position="54"/>
        <end position="279"/>
    </location>
</feature>
<feature type="active site" description="Nucleophile" evidence="1">
    <location>
        <position position="54"/>
    </location>
</feature>
<name>PSB_STANL</name>